<feature type="chain" id="PRO_1000194725" description="Ribose-5-phosphate isomerase A">
    <location>
        <begin position="1"/>
        <end position="227"/>
    </location>
</feature>
<feature type="active site" description="Proton acceptor" evidence="1">
    <location>
        <position position="104"/>
    </location>
</feature>
<feature type="binding site" evidence="1">
    <location>
        <begin position="26"/>
        <end position="29"/>
    </location>
    <ligand>
        <name>substrate</name>
    </ligand>
</feature>
<feature type="binding site" evidence="1">
    <location>
        <begin position="82"/>
        <end position="85"/>
    </location>
    <ligand>
        <name>substrate</name>
    </ligand>
</feature>
<feature type="binding site" evidence="1">
    <location>
        <begin position="95"/>
        <end position="98"/>
    </location>
    <ligand>
        <name>substrate</name>
    </ligand>
</feature>
<feature type="binding site" evidence="1">
    <location>
        <position position="122"/>
    </location>
    <ligand>
        <name>substrate</name>
    </ligand>
</feature>
<name>RPIA_STRZJ</name>
<dbReference type="EC" id="5.3.1.6" evidence="1"/>
<dbReference type="EMBL" id="CP000919">
    <property type="protein sequence ID" value="ACO18459.1"/>
    <property type="molecule type" value="Genomic_DNA"/>
</dbReference>
<dbReference type="RefSeq" id="WP_000429260.1">
    <property type="nucleotide sequence ID" value="NC_012466.1"/>
</dbReference>
<dbReference type="SMR" id="C1CDH6"/>
<dbReference type="KEGG" id="sjj:SPJ_0766"/>
<dbReference type="HOGENOM" id="CLU_056590_1_0_9"/>
<dbReference type="UniPathway" id="UPA00115">
    <property type="reaction ID" value="UER00412"/>
</dbReference>
<dbReference type="Proteomes" id="UP000002206">
    <property type="component" value="Chromosome"/>
</dbReference>
<dbReference type="GO" id="GO:0004751">
    <property type="term" value="F:ribose-5-phosphate isomerase activity"/>
    <property type="evidence" value="ECO:0007669"/>
    <property type="project" value="UniProtKB-UniRule"/>
</dbReference>
<dbReference type="GO" id="GO:0009052">
    <property type="term" value="P:pentose-phosphate shunt, non-oxidative branch"/>
    <property type="evidence" value="ECO:0007669"/>
    <property type="project" value="UniProtKB-UniRule"/>
</dbReference>
<dbReference type="CDD" id="cd01398">
    <property type="entry name" value="RPI_A"/>
    <property type="match status" value="1"/>
</dbReference>
<dbReference type="FunFam" id="3.40.50.1360:FF:000001">
    <property type="entry name" value="Ribose-5-phosphate isomerase A"/>
    <property type="match status" value="1"/>
</dbReference>
<dbReference type="Gene3D" id="3.30.70.260">
    <property type="match status" value="1"/>
</dbReference>
<dbReference type="Gene3D" id="3.40.50.1360">
    <property type="match status" value="1"/>
</dbReference>
<dbReference type="HAMAP" id="MF_00170">
    <property type="entry name" value="Rib_5P_isom_A"/>
    <property type="match status" value="1"/>
</dbReference>
<dbReference type="InterPro" id="IPR037171">
    <property type="entry name" value="NagB/RpiA_transferase-like"/>
</dbReference>
<dbReference type="InterPro" id="IPR050262">
    <property type="entry name" value="Ribose-5P_isomerase"/>
</dbReference>
<dbReference type="InterPro" id="IPR020672">
    <property type="entry name" value="Ribose5P_isomerase_typA_subgr"/>
</dbReference>
<dbReference type="InterPro" id="IPR004788">
    <property type="entry name" value="Ribose5P_isomerase_type_A"/>
</dbReference>
<dbReference type="NCBIfam" id="NF001924">
    <property type="entry name" value="PRK00702.1"/>
    <property type="match status" value="1"/>
</dbReference>
<dbReference type="NCBIfam" id="TIGR00021">
    <property type="entry name" value="rpiA"/>
    <property type="match status" value="1"/>
</dbReference>
<dbReference type="PANTHER" id="PTHR43748">
    <property type="entry name" value="RIBOSE-5-PHOSPHATE ISOMERASE 3, CHLOROPLASTIC-RELATED"/>
    <property type="match status" value="1"/>
</dbReference>
<dbReference type="PANTHER" id="PTHR43748:SF3">
    <property type="entry name" value="RIBOSE-5-PHOSPHATE ISOMERASE 3, CHLOROPLASTIC-RELATED"/>
    <property type="match status" value="1"/>
</dbReference>
<dbReference type="Pfam" id="PF06026">
    <property type="entry name" value="Rib_5-P_isom_A"/>
    <property type="match status" value="1"/>
</dbReference>
<dbReference type="SUPFAM" id="SSF75445">
    <property type="entry name" value="D-ribose-5-phosphate isomerase (RpiA), lid domain"/>
    <property type="match status" value="1"/>
</dbReference>
<dbReference type="SUPFAM" id="SSF100950">
    <property type="entry name" value="NagB/RpiA/CoA transferase-like"/>
    <property type="match status" value="1"/>
</dbReference>
<proteinExistence type="inferred from homology"/>
<accession>C1CDH6</accession>
<reference key="1">
    <citation type="journal article" date="2010" name="Genome Biol.">
        <title>Structure and dynamics of the pan-genome of Streptococcus pneumoniae and closely related species.</title>
        <authorList>
            <person name="Donati C."/>
            <person name="Hiller N.L."/>
            <person name="Tettelin H."/>
            <person name="Muzzi A."/>
            <person name="Croucher N.J."/>
            <person name="Angiuoli S.V."/>
            <person name="Oggioni M."/>
            <person name="Dunning Hotopp J.C."/>
            <person name="Hu F.Z."/>
            <person name="Riley D.R."/>
            <person name="Covacci A."/>
            <person name="Mitchell T.J."/>
            <person name="Bentley S.D."/>
            <person name="Kilian M."/>
            <person name="Ehrlich G.D."/>
            <person name="Rappuoli R."/>
            <person name="Moxon E.R."/>
            <person name="Masignani V."/>
        </authorList>
    </citation>
    <scope>NUCLEOTIDE SEQUENCE [LARGE SCALE GENOMIC DNA]</scope>
    <source>
        <strain>JJA</strain>
    </source>
</reference>
<protein>
    <recommendedName>
        <fullName evidence="1">Ribose-5-phosphate isomerase A</fullName>
        <ecNumber evidence="1">5.3.1.6</ecNumber>
    </recommendedName>
    <alternativeName>
        <fullName evidence="1">Phosphoriboisomerase A</fullName>
        <shortName evidence="1">PRI</shortName>
    </alternativeName>
</protein>
<gene>
    <name evidence="1" type="primary">rpiA</name>
    <name type="ordered locus">SPJ_0766</name>
</gene>
<comment type="function">
    <text evidence="1">Catalyzes the reversible conversion of ribose-5-phosphate to ribulose 5-phosphate.</text>
</comment>
<comment type="catalytic activity">
    <reaction evidence="1">
        <text>aldehydo-D-ribose 5-phosphate = D-ribulose 5-phosphate</text>
        <dbReference type="Rhea" id="RHEA:14657"/>
        <dbReference type="ChEBI" id="CHEBI:58121"/>
        <dbReference type="ChEBI" id="CHEBI:58273"/>
        <dbReference type="EC" id="5.3.1.6"/>
    </reaction>
</comment>
<comment type="pathway">
    <text evidence="1">Carbohydrate degradation; pentose phosphate pathway; D-ribose 5-phosphate from D-ribulose 5-phosphate (non-oxidative stage): step 1/1.</text>
</comment>
<comment type="subunit">
    <text evidence="1">Homodimer.</text>
</comment>
<comment type="similarity">
    <text evidence="1">Belongs to the ribose 5-phosphate isomerase family.</text>
</comment>
<evidence type="ECO:0000255" key="1">
    <source>
        <dbReference type="HAMAP-Rule" id="MF_00170"/>
    </source>
</evidence>
<sequence length="227" mass="24865">MENLKKMAGIKAAEFVKDGMVVGLGTGSTAYYFVEEIGRRIKEEGLQIIAVTTSSVTTKQAEGLNIPLKSIDQVDFVDVTVDGADEVDSQFNGIKGGGGALLMEKVVATPSKEYIWVVDESKLVEKLGAFKLPVEVVQYGAEQVFRRFERAGYKPSFREKDGQRFVTDMQNFIIDLALDVIENPIAFGQELDHVVGVVEHGLFNQMVDKVIVAGRDGVQISTSKKGK</sequence>
<keyword id="KW-0413">Isomerase</keyword>
<organism>
    <name type="scientific">Streptococcus pneumoniae (strain JJA)</name>
    <dbReference type="NCBI Taxonomy" id="488222"/>
    <lineage>
        <taxon>Bacteria</taxon>
        <taxon>Bacillati</taxon>
        <taxon>Bacillota</taxon>
        <taxon>Bacilli</taxon>
        <taxon>Lactobacillales</taxon>
        <taxon>Streptococcaceae</taxon>
        <taxon>Streptococcus</taxon>
    </lineage>
</organism>